<proteinExistence type="evidence at protein level"/>
<gene>
    <name type="primary">Itpkc</name>
</gene>
<name>IP3KC_MOUSE</name>
<feature type="chain" id="PRO_0000234071" description="Inositol-trisphosphate 3-kinase C">
    <location>
        <begin position="1"/>
        <end position="678"/>
    </location>
</feature>
<feature type="region of interest" description="Disordered" evidence="4">
    <location>
        <begin position="26"/>
        <end position="128"/>
    </location>
</feature>
<feature type="region of interest" description="Disordered" evidence="4">
    <location>
        <begin position="151"/>
        <end position="300"/>
    </location>
</feature>
<feature type="region of interest" description="Disordered" evidence="4">
    <location>
        <begin position="328"/>
        <end position="380"/>
    </location>
</feature>
<feature type="region of interest" description="Calmodulin-binding" evidence="1">
    <location>
        <begin position="504"/>
        <end position="512"/>
    </location>
</feature>
<feature type="short sequence motif" description="Nuclear export signal" evidence="1">
    <location>
        <begin position="318"/>
        <end position="326"/>
    </location>
</feature>
<feature type="compositionally biased region" description="Gly residues" evidence="4">
    <location>
        <begin position="44"/>
        <end position="58"/>
    </location>
</feature>
<feature type="compositionally biased region" description="Basic and acidic residues" evidence="4">
    <location>
        <begin position="61"/>
        <end position="76"/>
    </location>
</feature>
<feature type="compositionally biased region" description="Basic and acidic residues" evidence="4">
    <location>
        <begin position="107"/>
        <end position="116"/>
    </location>
</feature>
<feature type="compositionally biased region" description="Basic and acidic residues" evidence="4">
    <location>
        <begin position="173"/>
        <end position="196"/>
    </location>
</feature>
<feature type="compositionally biased region" description="Basic and acidic residues" evidence="4">
    <location>
        <begin position="220"/>
        <end position="236"/>
    </location>
</feature>
<feature type="binding site" evidence="1">
    <location>
        <position position="426"/>
    </location>
    <ligand>
        <name>ATP</name>
        <dbReference type="ChEBI" id="CHEBI:30616"/>
    </ligand>
</feature>
<feature type="binding site" evidence="1">
    <location>
        <begin position="466"/>
        <end position="468"/>
    </location>
    <ligand>
        <name>ATP</name>
        <dbReference type="ChEBI" id="CHEBI:30616"/>
    </ligand>
</feature>
<feature type="binding site" evidence="1">
    <location>
        <position position="479"/>
    </location>
    <ligand>
        <name>ATP</name>
        <dbReference type="ChEBI" id="CHEBI:30616"/>
    </ligand>
</feature>
<feature type="binding site" evidence="1">
    <location>
        <position position="481"/>
    </location>
    <ligand>
        <name>substrate</name>
    </ligand>
</feature>
<feature type="binding site" evidence="1">
    <location>
        <begin position="502"/>
        <end position="508"/>
    </location>
    <ligand>
        <name>substrate</name>
    </ligand>
</feature>
<feature type="binding site" evidence="1">
    <location>
        <begin position="529"/>
        <end position="536"/>
    </location>
    <ligand>
        <name>substrate</name>
    </ligand>
</feature>
<feature type="binding site" evidence="1">
    <location>
        <position position="553"/>
    </location>
    <ligand>
        <name>ATP</name>
        <dbReference type="ChEBI" id="CHEBI:30616"/>
    </ligand>
</feature>
<feature type="binding site" evidence="1">
    <location>
        <position position="633"/>
    </location>
    <ligand>
        <name>ATP</name>
        <dbReference type="ChEBI" id="CHEBI:30616"/>
    </ligand>
</feature>
<feature type="binding site" evidence="1">
    <location>
        <position position="636"/>
    </location>
    <ligand>
        <name>substrate</name>
    </ligand>
</feature>
<feature type="modified residue" description="Phosphoserine" evidence="6">
    <location>
        <position position="160"/>
    </location>
</feature>
<feature type="modified residue" description="Phosphothreonine" evidence="3">
    <location>
        <position position="330"/>
    </location>
</feature>
<feature type="modified residue" description="Phosphoserine" evidence="3">
    <location>
        <position position="398"/>
    </location>
</feature>
<feature type="sequence conflict" description="In Ref. 1; BAE32904." evidence="5" ref="1">
    <original>D</original>
    <variation>N</variation>
    <location>
        <position position="458"/>
    </location>
</feature>
<sequence>MRRCPCRGSLSEAEAGALPAEARMGLEALRGGRRRQPGLQRPGPGAGGPTGRPEGGGPRAWIEESSLHSEAERTDLEPAPCPNGPQAESCGDGHAECEAAGLVVASEKPRQNKELDGSNLQTHPRRNSPLVEMEMAGSWTDGFRTDLHRSDLQSRPKRASLCTQPGFDESWTELDRSDMWQTLPERDNKPRVDNLRTHHGVSKLQTHPVCLSPESSADNSGKELSADASRTPHDTDGFWIESQTDDSLKGPSTQTACRQPGSDGFSSKDTESALTQPGTDGLRDDSVLGESNGNDPLDLSEPGELVTNLCSHLECSSLCPVPRLIITPETPEPEAQPVGPQSRIEGGTGGFSSASSFDESEDDLVAGGGGTSDPEDRAGSKPWKKLKTVLKYSPFVVSFHKHYYPWVQLSGHAGNFQAGEDGRILKRFCQCEQRSLELLMGDPLRPFVPAYYGMVQRDGQAFNQMEDLLADFEGPSIMDCKMGSRTYLEEELVKARERPKPRKDMYEKMVAVDPGAPTPEEHAQGAITKPRYMQWRETLSSTSTLGFRIEGIKKADGTCNTNFKKTQALEQVTKVLEDFVNGDLGILRKYVARLEDLRETLENSPFFKTHEVVGSSLLFVHDHTGLAKVWMIDFGKTVALPDHQMLSHRLPWTEGNREDGYLWGLDNLICLLQGLAQS</sequence>
<reference key="1">
    <citation type="journal article" date="2005" name="Science">
        <title>The transcriptional landscape of the mammalian genome.</title>
        <authorList>
            <person name="Carninci P."/>
            <person name="Kasukawa T."/>
            <person name="Katayama S."/>
            <person name="Gough J."/>
            <person name="Frith M.C."/>
            <person name="Maeda N."/>
            <person name="Oyama R."/>
            <person name="Ravasi T."/>
            <person name="Lenhard B."/>
            <person name="Wells C."/>
            <person name="Kodzius R."/>
            <person name="Shimokawa K."/>
            <person name="Bajic V.B."/>
            <person name="Brenner S.E."/>
            <person name="Batalov S."/>
            <person name="Forrest A.R."/>
            <person name="Zavolan M."/>
            <person name="Davis M.J."/>
            <person name="Wilming L.G."/>
            <person name="Aidinis V."/>
            <person name="Allen J.E."/>
            <person name="Ambesi-Impiombato A."/>
            <person name="Apweiler R."/>
            <person name="Aturaliya R.N."/>
            <person name="Bailey T.L."/>
            <person name="Bansal M."/>
            <person name="Baxter L."/>
            <person name="Beisel K.W."/>
            <person name="Bersano T."/>
            <person name="Bono H."/>
            <person name="Chalk A.M."/>
            <person name="Chiu K.P."/>
            <person name="Choudhary V."/>
            <person name="Christoffels A."/>
            <person name="Clutterbuck D.R."/>
            <person name="Crowe M.L."/>
            <person name="Dalla E."/>
            <person name="Dalrymple B.P."/>
            <person name="de Bono B."/>
            <person name="Della Gatta G."/>
            <person name="di Bernardo D."/>
            <person name="Down T."/>
            <person name="Engstrom P."/>
            <person name="Fagiolini M."/>
            <person name="Faulkner G."/>
            <person name="Fletcher C.F."/>
            <person name="Fukushima T."/>
            <person name="Furuno M."/>
            <person name="Futaki S."/>
            <person name="Gariboldi M."/>
            <person name="Georgii-Hemming P."/>
            <person name="Gingeras T.R."/>
            <person name="Gojobori T."/>
            <person name="Green R.E."/>
            <person name="Gustincich S."/>
            <person name="Harbers M."/>
            <person name="Hayashi Y."/>
            <person name="Hensch T.K."/>
            <person name="Hirokawa N."/>
            <person name="Hill D."/>
            <person name="Huminiecki L."/>
            <person name="Iacono M."/>
            <person name="Ikeo K."/>
            <person name="Iwama A."/>
            <person name="Ishikawa T."/>
            <person name="Jakt M."/>
            <person name="Kanapin A."/>
            <person name="Katoh M."/>
            <person name="Kawasawa Y."/>
            <person name="Kelso J."/>
            <person name="Kitamura H."/>
            <person name="Kitano H."/>
            <person name="Kollias G."/>
            <person name="Krishnan S.P."/>
            <person name="Kruger A."/>
            <person name="Kummerfeld S.K."/>
            <person name="Kurochkin I.V."/>
            <person name="Lareau L.F."/>
            <person name="Lazarevic D."/>
            <person name="Lipovich L."/>
            <person name="Liu J."/>
            <person name="Liuni S."/>
            <person name="McWilliam S."/>
            <person name="Madan Babu M."/>
            <person name="Madera M."/>
            <person name="Marchionni L."/>
            <person name="Matsuda H."/>
            <person name="Matsuzawa S."/>
            <person name="Miki H."/>
            <person name="Mignone F."/>
            <person name="Miyake S."/>
            <person name="Morris K."/>
            <person name="Mottagui-Tabar S."/>
            <person name="Mulder N."/>
            <person name="Nakano N."/>
            <person name="Nakauchi H."/>
            <person name="Ng P."/>
            <person name="Nilsson R."/>
            <person name="Nishiguchi S."/>
            <person name="Nishikawa S."/>
            <person name="Nori F."/>
            <person name="Ohara O."/>
            <person name="Okazaki Y."/>
            <person name="Orlando V."/>
            <person name="Pang K.C."/>
            <person name="Pavan W.J."/>
            <person name="Pavesi G."/>
            <person name="Pesole G."/>
            <person name="Petrovsky N."/>
            <person name="Piazza S."/>
            <person name="Reed J."/>
            <person name="Reid J.F."/>
            <person name="Ring B.Z."/>
            <person name="Ringwald M."/>
            <person name="Rost B."/>
            <person name="Ruan Y."/>
            <person name="Salzberg S.L."/>
            <person name="Sandelin A."/>
            <person name="Schneider C."/>
            <person name="Schoenbach C."/>
            <person name="Sekiguchi K."/>
            <person name="Semple C.A."/>
            <person name="Seno S."/>
            <person name="Sessa L."/>
            <person name="Sheng Y."/>
            <person name="Shibata Y."/>
            <person name="Shimada H."/>
            <person name="Shimada K."/>
            <person name="Silva D."/>
            <person name="Sinclair B."/>
            <person name="Sperling S."/>
            <person name="Stupka E."/>
            <person name="Sugiura K."/>
            <person name="Sultana R."/>
            <person name="Takenaka Y."/>
            <person name="Taki K."/>
            <person name="Tammoja K."/>
            <person name="Tan S.L."/>
            <person name="Tang S."/>
            <person name="Taylor M.S."/>
            <person name="Tegner J."/>
            <person name="Teichmann S.A."/>
            <person name="Ueda H.R."/>
            <person name="van Nimwegen E."/>
            <person name="Verardo R."/>
            <person name="Wei C.L."/>
            <person name="Yagi K."/>
            <person name="Yamanishi H."/>
            <person name="Zabarovsky E."/>
            <person name="Zhu S."/>
            <person name="Zimmer A."/>
            <person name="Hide W."/>
            <person name="Bult C."/>
            <person name="Grimmond S.M."/>
            <person name="Teasdale R.D."/>
            <person name="Liu E.T."/>
            <person name="Brusic V."/>
            <person name="Quackenbush J."/>
            <person name="Wahlestedt C."/>
            <person name="Mattick J.S."/>
            <person name="Hume D.A."/>
            <person name="Kai C."/>
            <person name="Sasaki D."/>
            <person name="Tomaru Y."/>
            <person name="Fukuda S."/>
            <person name="Kanamori-Katayama M."/>
            <person name="Suzuki M."/>
            <person name="Aoki J."/>
            <person name="Arakawa T."/>
            <person name="Iida J."/>
            <person name="Imamura K."/>
            <person name="Itoh M."/>
            <person name="Kato T."/>
            <person name="Kawaji H."/>
            <person name="Kawagashira N."/>
            <person name="Kawashima T."/>
            <person name="Kojima M."/>
            <person name="Kondo S."/>
            <person name="Konno H."/>
            <person name="Nakano K."/>
            <person name="Ninomiya N."/>
            <person name="Nishio T."/>
            <person name="Okada M."/>
            <person name="Plessy C."/>
            <person name="Shibata K."/>
            <person name="Shiraki T."/>
            <person name="Suzuki S."/>
            <person name="Tagami M."/>
            <person name="Waki K."/>
            <person name="Watahiki A."/>
            <person name="Okamura-Oho Y."/>
            <person name="Suzuki H."/>
            <person name="Kawai J."/>
            <person name="Hayashizaki Y."/>
        </authorList>
    </citation>
    <scope>NUCLEOTIDE SEQUENCE [LARGE SCALE MRNA]</scope>
    <source>
        <strain>NOD</strain>
    </source>
</reference>
<reference key="2">
    <citation type="journal article" date="2004" name="Genome Res.">
        <title>The status, quality, and expansion of the NIH full-length cDNA project: the Mammalian Gene Collection (MGC).</title>
        <authorList>
            <consortium name="The MGC Project Team"/>
        </authorList>
    </citation>
    <scope>NUCLEOTIDE SEQUENCE [LARGE SCALE MRNA]</scope>
    <source>
        <tissue>Limb</tissue>
    </source>
</reference>
<reference key="3">
    <citation type="journal article" date="2010" name="Cell">
        <title>A tissue-specific atlas of mouse protein phosphorylation and expression.</title>
        <authorList>
            <person name="Huttlin E.L."/>
            <person name="Jedrychowski M.P."/>
            <person name="Elias J.E."/>
            <person name="Goswami T."/>
            <person name="Rad R."/>
            <person name="Beausoleil S.A."/>
            <person name="Villen J."/>
            <person name="Haas W."/>
            <person name="Sowa M.E."/>
            <person name="Gygi S.P."/>
        </authorList>
    </citation>
    <scope>PHOSPHORYLATION [LARGE SCALE ANALYSIS] AT SER-160</scope>
    <scope>IDENTIFICATION BY MASS SPECTROMETRY [LARGE SCALE ANALYSIS]</scope>
    <source>
        <tissue>Kidney</tissue>
        <tissue>Lung</tissue>
        <tissue>Spleen</tissue>
    </source>
</reference>
<dbReference type="EC" id="2.7.1.127"/>
<dbReference type="EMBL" id="AK154888">
    <property type="protein sequence ID" value="BAE32904.1"/>
    <property type="molecule type" value="mRNA"/>
</dbReference>
<dbReference type="EMBL" id="BC053450">
    <property type="protein sequence ID" value="AAH53450.1"/>
    <property type="molecule type" value="mRNA"/>
</dbReference>
<dbReference type="CCDS" id="CCDS21015.1"/>
<dbReference type="RefSeq" id="NP_853624.1">
    <property type="nucleotide sequence ID" value="NM_181593.3"/>
</dbReference>
<dbReference type="SMR" id="Q7TS72"/>
<dbReference type="FunCoup" id="Q7TS72">
    <property type="interactions" value="2974"/>
</dbReference>
<dbReference type="IntAct" id="Q7TS72">
    <property type="interactions" value="1"/>
</dbReference>
<dbReference type="STRING" id="10090.ENSMUSP00000003850"/>
<dbReference type="GlyGen" id="Q7TS72">
    <property type="glycosylation" value="2 sites"/>
</dbReference>
<dbReference type="iPTMnet" id="Q7TS72"/>
<dbReference type="PhosphoSitePlus" id="Q7TS72"/>
<dbReference type="PaxDb" id="10090-ENSMUSP00000003850"/>
<dbReference type="PeptideAtlas" id="Q7TS72"/>
<dbReference type="ProteomicsDB" id="268983"/>
<dbReference type="Pumba" id="Q7TS72"/>
<dbReference type="Antibodypedia" id="30626">
    <property type="antibodies" value="185 antibodies from 31 providers"/>
</dbReference>
<dbReference type="DNASU" id="233011"/>
<dbReference type="Ensembl" id="ENSMUST00000003850.8">
    <property type="protein sequence ID" value="ENSMUSP00000003850.8"/>
    <property type="gene ID" value="ENSMUSG00000003752.10"/>
</dbReference>
<dbReference type="GeneID" id="233011"/>
<dbReference type="KEGG" id="mmu:233011"/>
<dbReference type="UCSC" id="uc009fvk.1">
    <property type="organism name" value="mouse"/>
</dbReference>
<dbReference type="AGR" id="MGI:2442554"/>
<dbReference type="CTD" id="80271"/>
<dbReference type="MGI" id="MGI:2442554">
    <property type="gene designation" value="Itpkc"/>
</dbReference>
<dbReference type="VEuPathDB" id="HostDB:ENSMUSG00000003752"/>
<dbReference type="eggNOG" id="KOG1621">
    <property type="taxonomic scope" value="Eukaryota"/>
</dbReference>
<dbReference type="GeneTree" id="ENSGT00940000160033"/>
<dbReference type="HOGENOM" id="CLU_017767_5_0_1"/>
<dbReference type="InParanoid" id="Q7TS72"/>
<dbReference type="OMA" id="WADNLWT"/>
<dbReference type="OrthoDB" id="338650at2759"/>
<dbReference type="PhylomeDB" id="Q7TS72"/>
<dbReference type="TreeFam" id="TF318394"/>
<dbReference type="BRENDA" id="2.7.1.127">
    <property type="organism ID" value="3474"/>
</dbReference>
<dbReference type="Reactome" id="R-MMU-1855204">
    <property type="pathway name" value="Synthesis of IP3 and IP4 in the cytosol"/>
</dbReference>
<dbReference type="BioGRID-ORCS" id="233011">
    <property type="hits" value="0 hits in 79 CRISPR screens"/>
</dbReference>
<dbReference type="ChiTaRS" id="Itpkc">
    <property type="organism name" value="mouse"/>
</dbReference>
<dbReference type="PRO" id="PR:Q7TS72"/>
<dbReference type="Proteomes" id="UP000000589">
    <property type="component" value="Chromosome 7"/>
</dbReference>
<dbReference type="RNAct" id="Q7TS72">
    <property type="molecule type" value="protein"/>
</dbReference>
<dbReference type="Bgee" id="ENSMUSG00000003752">
    <property type="expression patterns" value="Expressed in lip and 194 other cell types or tissues"/>
</dbReference>
<dbReference type="GO" id="GO:0005737">
    <property type="term" value="C:cytoplasm"/>
    <property type="evidence" value="ECO:0000250"/>
    <property type="project" value="UniProtKB"/>
</dbReference>
<dbReference type="GO" id="GO:0016607">
    <property type="term" value="C:nuclear speck"/>
    <property type="evidence" value="ECO:0007669"/>
    <property type="project" value="Ensembl"/>
</dbReference>
<dbReference type="GO" id="GO:0005634">
    <property type="term" value="C:nucleus"/>
    <property type="evidence" value="ECO:0000250"/>
    <property type="project" value="UniProtKB"/>
</dbReference>
<dbReference type="GO" id="GO:0005524">
    <property type="term" value="F:ATP binding"/>
    <property type="evidence" value="ECO:0007669"/>
    <property type="project" value="UniProtKB-KW"/>
</dbReference>
<dbReference type="GO" id="GO:0005516">
    <property type="term" value="F:calmodulin binding"/>
    <property type="evidence" value="ECO:0007669"/>
    <property type="project" value="UniProtKB-KW"/>
</dbReference>
<dbReference type="GO" id="GO:0008440">
    <property type="term" value="F:inositol-1,4,5-trisphosphate 3-kinase activity"/>
    <property type="evidence" value="ECO:0000314"/>
    <property type="project" value="MGI"/>
</dbReference>
<dbReference type="GO" id="GO:0071277">
    <property type="term" value="P:cellular response to calcium ion"/>
    <property type="evidence" value="ECO:0000250"/>
    <property type="project" value="UniProtKB"/>
</dbReference>
<dbReference type="GO" id="GO:0032958">
    <property type="term" value="P:inositol phosphate biosynthetic process"/>
    <property type="evidence" value="ECO:0007669"/>
    <property type="project" value="InterPro"/>
</dbReference>
<dbReference type="GO" id="GO:0046854">
    <property type="term" value="P:phosphatidylinositol phosphate biosynthetic process"/>
    <property type="evidence" value="ECO:0000250"/>
    <property type="project" value="UniProtKB"/>
</dbReference>
<dbReference type="FunFam" id="3.30.470.160:FF:000001">
    <property type="entry name" value="Kinase"/>
    <property type="match status" value="1"/>
</dbReference>
<dbReference type="Gene3D" id="3.30.470.160">
    <property type="entry name" value="Inositol polyphosphate kinase"/>
    <property type="match status" value="1"/>
</dbReference>
<dbReference type="InterPro" id="IPR005522">
    <property type="entry name" value="IPK"/>
</dbReference>
<dbReference type="InterPro" id="IPR038286">
    <property type="entry name" value="IPK_sf"/>
</dbReference>
<dbReference type="PANTHER" id="PTHR12400">
    <property type="entry name" value="INOSITOL POLYPHOSPHATE KINASE"/>
    <property type="match status" value="1"/>
</dbReference>
<dbReference type="PANTHER" id="PTHR12400:SF106">
    <property type="entry name" value="INOSITOL-TRISPHOSPHATE 3-KINASE C"/>
    <property type="match status" value="1"/>
</dbReference>
<dbReference type="Pfam" id="PF03770">
    <property type="entry name" value="IPK"/>
    <property type="match status" value="1"/>
</dbReference>
<dbReference type="SUPFAM" id="SSF56104">
    <property type="entry name" value="SAICAR synthase-like"/>
    <property type="match status" value="1"/>
</dbReference>
<accession>Q7TS72</accession>
<accession>Q3U384</accession>
<evidence type="ECO:0000250" key="1"/>
<evidence type="ECO:0000250" key="2">
    <source>
        <dbReference type="UniProtKB" id="Q80ZG2"/>
    </source>
</evidence>
<evidence type="ECO:0000250" key="3">
    <source>
        <dbReference type="UniProtKB" id="Q96DU7"/>
    </source>
</evidence>
<evidence type="ECO:0000256" key="4">
    <source>
        <dbReference type="SAM" id="MobiDB-lite"/>
    </source>
</evidence>
<evidence type="ECO:0000305" key="5"/>
<evidence type="ECO:0007744" key="6">
    <source>
    </source>
</evidence>
<keyword id="KW-0067">ATP-binding</keyword>
<keyword id="KW-0112">Calmodulin-binding</keyword>
<keyword id="KW-0963">Cytoplasm</keyword>
<keyword id="KW-0418">Kinase</keyword>
<keyword id="KW-0547">Nucleotide-binding</keyword>
<keyword id="KW-0539">Nucleus</keyword>
<keyword id="KW-0597">Phosphoprotein</keyword>
<keyword id="KW-1185">Reference proteome</keyword>
<keyword id="KW-0808">Transferase</keyword>
<comment type="function">
    <text evidence="2 3">Catalyzes the phosphorylation of 1D-myo-inositol 1,4,5-trisphosphate (InsP3) into 1D-myo-inositol 1,3,4,5-tetrakisphosphate and participates to the regulation of calcium homeostasis (By similarity). Can phosphorylate inositol 2,4,5-triphosphate to inositol 2,4,5,6-tetraphosphate (By similarity).</text>
</comment>
<comment type="catalytic activity">
    <reaction evidence="3">
        <text>1D-myo-inositol 1,4,5-trisphosphate + ATP = 1D-myo-inositol 1,3,4,5-tetrakisphosphate + ADP + H(+)</text>
        <dbReference type="Rhea" id="RHEA:11020"/>
        <dbReference type="ChEBI" id="CHEBI:15378"/>
        <dbReference type="ChEBI" id="CHEBI:30616"/>
        <dbReference type="ChEBI" id="CHEBI:57895"/>
        <dbReference type="ChEBI" id="CHEBI:203600"/>
        <dbReference type="ChEBI" id="CHEBI:456216"/>
        <dbReference type="EC" id="2.7.1.127"/>
    </reaction>
    <physiologicalReaction direction="left-to-right" evidence="3">
        <dbReference type="Rhea" id="RHEA:11021"/>
    </physiologicalReaction>
</comment>
<comment type="activity regulation">
    <text evidence="3">Activated by calcium/calmodulin. Inhibited by high concentrations of the substrate Ins(1,2,4)P3, and allosterically activated by the product Ins(1,3,4,5)P4.</text>
</comment>
<comment type="interaction">
    <interactant intactId="EBI-648015">
        <id>Q7TS72</id>
    </interactant>
    <interactant intactId="EBI-641708">
        <id>O54824</id>
        <label>Il16</label>
    </interactant>
    <organismsDiffer>false</organismsDiffer>
    <experiments>3</experiments>
</comment>
<comment type="subcellular location">
    <subcellularLocation>
        <location evidence="3">Nucleus</location>
    </subcellularLocation>
    <subcellularLocation>
        <location evidence="3">Cytoplasm</location>
    </subcellularLocation>
    <text evidence="2">Shuttles actively between nucleus and cytoplasm with both nuclear import and nuclear export activity.</text>
</comment>
<comment type="similarity">
    <text evidence="5">Belongs to the inositol phosphokinase (IPK) family.</text>
</comment>
<protein>
    <recommendedName>
        <fullName>Inositol-trisphosphate 3-kinase C</fullName>
        <ecNumber>2.7.1.127</ecNumber>
    </recommendedName>
    <alternativeName>
        <fullName>Inositol 1,4,5-trisphosphate 3-kinase C</fullName>
        <shortName>IP3 3-kinase C</shortName>
        <shortName>IP3K C</shortName>
        <shortName>InsP 3-kinase C</shortName>
    </alternativeName>
</protein>
<organism>
    <name type="scientific">Mus musculus</name>
    <name type="common">Mouse</name>
    <dbReference type="NCBI Taxonomy" id="10090"/>
    <lineage>
        <taxon>Eukaryota</taxon>
        <taxon>Metazoa</taxon>
        <taxon>Chordata</taxon>
        <taxon>Craniata</taxon>
        <taxon>Vertebrata</taxon>
        <taxon>Euteleostomi</taxon>
        <taxon>Mammalia</taxon>
        <taxon>Eutheria</taxon>
        <taxon>Euarchontoglires</taxon>
        <taxon>Glires</taxon>
        <taxon>Rodentia</taxon>
        <taxon>Myomorpha</taxon>
        <taxon>Muroidea</taxon>
        <taxon>Muridae</taxon>
        <taxon>Murinae</taxon>
        <taxon>Mus</taxon>
        <taxon>Mus</taxon>
    </lineage>
</organism>